<sequence>MARIAGVDIPRDKRVVISLTYVFGIGRTTAEKILAEAGVSEETRVRDLTEDELGRIRDIIDRIKVEGDLRREVSLNIKRLMEIGSYRGLRHRRGLPVRGQNSKNNARTRKGPRRTVANKKK</sequence>
<organism>
    <name type="scientific">Bacillus cereus (strain Q1)</name>
    <dbReference type="NCBI Taxonomy" id="361100"/>
    <lineage>
        <taxon>Bacteria</taxon>
        <taxon>Bacillati</taxon>
        <taxon>Bacillota</taxon>
        <taxon>Bacilli</taxon>
        <taxon>Bacillales</taxon>
        <taxon>Bacillaceae</taxon>
        <taxon>Bacillus</taxon>
        <taxon>Bacillus cereus group</taxon>
    </lineage>
</organism>
<proteinExistence type="inferred from homology"/>
<evidence type="ECO:0000255" key="1">
    <source>
        <dbReference type="HAMAP-Rule" id="MF_01315"/>
    </source>
</evidence>
<evidence type="ECO:0000256" key="2">
    <source>
        <dbReference type="SAM" id="MobiDB-lite"/>
    </source>
</evidence>
<evidence type="ECO:0000305" key="3"/>
<protein>
    <recommendedName>
        <fullName evidence="1">Small ribosomal subunit protein uS13</fullName>
    </recommendedName>
    <alternativeName>
        <fullName evidence="3">30S ribosomal protein S13</fullName>
    </alternativeName>
</protein>
<reference key="1">
    <citation type="journal article" date="2009" name="J. Bacteriol.">
        <title>Complete genome sequence of the extremophilic Bacillus cereus strain Q1 with industrial applications.</title>
        <authorList>
            <person name="Xiong Z."/>
            <person name="Jiang Y."/>
            <person name="Qi D."/>
            <person name="Lu H."/>
            <person name="Yang F."/>
            <person name="Yang J."/>
            <person name="Chen L."/>
            <person name="Sun L."/>
            <person name="Xu X."/>
            <person name="Xue Y."/>
            <person name="Zhu Y."/>
            <person name="Jin Q."/>
        </authorList>
    </citation>
    <scope>NUCLEOTIDE SEQUENCE [LARGE SCALE GENOMIC DNA]</scope>
    <source>
        <strain>Q1</strain>
    </source>
</reference>
<keyword id="KW-0687">Ribonucleoprotein</keyword>
<keyword id="KW-0689">Ribosomal protein</keyword>
<keyword id="KW-0694">RNA-binding</keyword>
<keyword id="KW-0699">rRNA-binding</keyword>
<keyword id="KW-0820">tRNA-binding</keyword>
<accession>B9IZL9</accession>
<feature type="chain" id="PRO_1000165601" description="Small ribosomal subunit protein uS13">
    <location>
        <begin position="1"/>
        <end position="121"/>
    </location>
</feature>
<feature type="region of interest" description="Disordered" evidence="2">
    <location>
        <begin position="91"/>
        <end position="121"/>
    </location>
</feature>
<feature type="compositionally biased region" description="Basic residues" evidence="2">
    <location>
        <begin position="106"/>
        <end position="121"/>
    </location>
</feature>
<name>RS13_BACCQ</name>
<gene>
    <name evidence="1" type="primary">rpsM</name>
    <name type="ordered locus">BCQ_0148</name>
</gene>
<comment type="function">
    <text evidence="1">Located at the top of the head of the 30S subunit, it contacts several helices of the 16S rRNA. In the 70S ribosome it contacts the 23S rRNA (bridge B1a) and protein L5 of the 50S subunit (bridge B1b), connecting the 2 subunits; these bridges are implicated in subunit movement. Contacts the tRNAs in the A and P-sites.</text>
</comment>
<comment type="subunit">
    <text evidence="1">Part of the 30S ribosomal subunit. Forms a loose heterodimer with protein S19. Forms two bridges to the 50S subunit in the 70S ribosome.</text>
</comment>
<comment type="similarity">
    <text evidence="1">Belongs to the universal ribosomal protein uS13 family.</text>
</comment>
<dbReference type="EMBL" id="CP000227">
    <property type="protein sequence ID" value="ACM10663.1"/>
    <property type="molecule type" value="Genomic_DNA"/>
</dbReference>
<dbReference type="SMR" id="B9IZL9"/>
<dbReference type="KEGG" id="bcq:BCQ_0148"/>
<dbReference type="HOGENOM" id="CLU_103849_1_1_9"/>
<dbReference type="Proteomes" id="UP000000441">
    <property type="component" value="Chromosome"/>
</dbReference>
<dbReference type="GO" id="GO:0005829">
    <property type="term" value="C:cytosol"/>
    <property type="evidence" value="ECO:0007669"/>
    <property type="project" value="TreeGrafter"/>
</dbReference>
<dbReference type="GO" id="GO:0015935">
    <property type="term" value="C:small ribosomal subunit"/>
    <property type="evidence" value="ECO:0007669"/>
    <property type="project" value="TreeGrafter"/>
</dbReference>
<dbReference type="GO" id="GO:0019843">
    <property type="term" value="F:rRNA binding"/>
    <property type="evidence" value="ECO:0007669"/>
    <property type="project" value="UniProtKB-UniRule"/>
</dbReference>
<dbReference type="GO" id="GO:0003735">
    <property type="term" value="F:structural constituent of ribosome"/>
    <property type="evidence" value="ECO:0007669"/>
    <property type="project" value="InterPro"/>
</dbReference>
<dbReference type="GO" id="GO:0000049">
    <property type="term" value="F:tRNA binding"/>
    <property type="evidence" value="ECO:0007669"/>
    <property type="project" value="UniProtKB-UniRule"/>
</dbReference>
<dbReference type="GO" id="GO:0006412">
    <property type="term" value="P:translation"/>
    <property type="evidence" value="ECO:0007669"/>
    <property type="project" value="UniProtKB-UniRule"/>
</dbReference>
<dbReference type="FunFam" id="1.10.8.50:FF:000001">
    <property type="entry name" value="30S ribosomal protein S13"/>
    <property type="match status" value="1"/>
</dbReference>
<dbReference type="FunFam" id="4.10.910.10:FF:000001">
    <property type="entry name" value="30S ribosomal protein S13"/>
    <property type="match status" value="1"/>
</dbReference>
<dbReference type="Gene3D" id="1.10.8.50">
    <property type="match status" value="1"/>
</dbReference>
<dbReference type="Gene3D" id="4.10.910.10">
    <property type="entry name" value="30s ribosomal protein s13, domain 2"/>
    <property type="match status" value="1"/>
</dbReference>
<dbReference type="HAMAP" id="MF_01315">
    <property type="entry name" value="Ribosomal_uS13"/>
    <property type="match status" value="1"/>
</dbReference>
<dbReference type="InterPro" id="IPR027437">
    <property type="entry name" value="Rbsml_uS13_C"/>
</dbReference>
<dbReference type="InterPro" id="IPR001892">
    <property type="entry name" value="Ribosomal_uS13"/>
</dbReference>
<dbReference type="InterPro" id="IPR010979">
    <property type="entry name" value="Ribosomal_uS13-like_H2TH"/>
</dbReference>
<dbReference type="InterPro" id="IPR019980">
    <property type="entry name" value="Ribosomal_uS13_bac-type"/>
</dbReference>
<dbReference type="InterPro" id="IPR018269">
    <property type="entry name" value="Ribosomal_uS13_CS"/>
</dbReference>
<dbReference type="NCBIfam" id="TIGR03631">
    <property type="entry name" value="uS13_bact"/>
    <property type="match status" value="1"/>
</dbReference>
<dbReference type="PANTHER" id="PTHR10871">
    <property type="entry name" value="30S RIBOSOMAL PROTEIN S13/40S RIBOSOMAL PROTEIN S18"/>
    <property type="match status" value="1"/>
</dbReference>
<dbReference type="PANTHER" id="PTHR10871:SF1">
    <property type="entry name" value="SMALL RIBOSOMAL SUBUNIT PROTEIN US13M"/>
    <property type="match status" value="1"/>
</dbReference>
<dbReference type="Pfam" id="PF00416">
    <property type="entry name" value="Ribosomal_S13"/>
    <property type="match status" value="1"/>
</dbReference>
<dbReference type="PIRSF" id="PIRSF002134">
    <property type="entry name" value="Ribosomal_S13"/>
    <property type="match status" value="1"/>
</dbReference>
<dbReference type="SUPFAM" id="SSF46946">
    <property type="entry name" value="S13-like H2TH domain"/>
    <property type="match status" value="1"/>
</dbReference>
<dbReference type="PROSITE" id="PS00646">
    <property type="entry name" value="RIBOSOMAL_S13_1"/>
    <property type="match status" value="1"/>
</dbReference>
<dbReference type="PROSITE" id="PS50159">
    <property type="entry name" value="RIBOSOMAL_S13_2"/>
    <property type="match status" value="1"/>
</dbReference>